<reference key="1">
    <citation type="journal article" date="2004" name="Genome Res.">
        <title>The status, quality, and expansion of the NIH full-length cDNA project: the Mammalian Gene Collection (MGC).</title>
        <authorList>
            <consortium name="The MGC Project Team"/>
        </authorList>
    </citation>
    <scope>NUCLEOTIDE SEQUENCE [LARGE SCALE MRNA]</scope>
    <source>
        <tissue>Testis</tissue>
    </source>
</reference>
<sequence>MNPLALLVEILIIIEVTTKNSEAERYNRKQKEVNVTTQVSVSKVKQFLSHLLEQGKANKIANKRENPLEKKKHQHKLKIKGIQNKNLLKRNQNYFKKPAKKSITDKGDELFKMGNKILQESKSQKQKTEAYTFFTRAADMGNLKAMEKMADALLFGSFGMQNITAAIQLYESLAKEGSYKAQNALGFLSSYGIGMEYDQAKALIYYTFGSAGGSMMSQMILGYRYLSGINVLQNCEVALNHYKKVADYIADKLEKSEGIPVEKVRLTERPENLSSNSEILDWDIYQYYKFLAERGDVQIQVSLGQLHLIGRKGLDQDYSKALYYFLKAAKAGSANAMAFIGKMYLEGNAAAPQNNATAFKYFSMAASKGNAIGLHGLGLLYFHGKGVPVNYGEALKYFQKAAEKGWPNAQFHLGFMYYSGSGVWKDYKLAFKYFYLASQSGQPLAIYYLAEMYATGTGVLRSCRTAVEPYKGVCELGHWAEKFLTAYFAYKDGDVDSSLIQYALLAEMGYEVAQSNSAFILESKKAKILGKEKMYPMALLLWNRAAIQGNAFARVKIGDYHYYGYGTKKDYETAATHYSIAADKHHSAQAMFNLAYMYEHGLGIAQDIHLARRLYDMAAQTSPDAHIPVFFALMKLETMHFLQDILFFNFTTKWKWLKLDSTIGPYWDLLVIGLIVVVLIFLLRNHHR</sequence>
<organism>
    <name type="scientific">Rattus norvegicus</name>
    <name type="common">Rat</name>
    <dbReference type="NCBI Taxonomy" id="10116"/>
    <lineage>
        <taxon>Eukaryota</taxon>
        <taxon>Metazoa</taxon>
        <taxon>Chordata</taxon>
        <taxon>Craniata</taxon>
        <taxon>Vertebrata</taxon>
        <taxon>Euteleostomi</taxon>
        <taxon>Mammalia</taxon>
        <taxon>Eutheria</taxon>
        <taxon>Euarchontoglires</taxon>
        <taxon>Glires</taxon>
        <taxon>Rodentia</taxon>
        <taxon>Myomorpha</taxon>
        <taxon>Muroidea</taxon>
        <taxon>Muridae</taxon>
        <taxon>Murinae</taxon>
        <taxon>Rattus</taxon>
    </lineage>
</organism>
<dbReference type="EMBL" id="BC083893">
    <property type="protein sequence ID" value="AAH83893.1"/>
    <property type="molecule type" value="mRNA"/>
</dbReference>
<dbReference type="RefSeq" id="NP_001014071.1">
    <property type="nucleotide sequence ID" value="NM_001014049.1"/>
</dbReference>
<dbReference type="SMR" id="Q5XI05"/>
<dbReference type="BioGRID" id="259950">
    <property type="interactions" value="1"/>
</dbReference>
<dbReference type="FunCoup" id="Q5XI05">
    <property type="interactions" value="313"/>
</dbReference>
<dbReference type="STRING" id="10116.ENSRNOP00000072949"/>
<dbReference type="GlyCosmos" id="Q5XI05">
    <property type="glycosylation" value="2 sites, No reported glycans"/>
</dbReference>
<dbReference type="GlyGen" id="Q5XI05">
    <property type="glycosylation" value="2 sites"/>
</dbReference>
<dbReference type="PhosphoSitePlus" id="Q5XI05"/>
<dbReference type="PaxDb" id="10116-ENSRNOP00000036379"/>
<dbReference type="GeneID" id="311470"/>
<dbReference type="KEGG" id="rno:311470"/>
<dbReference type="UCSC" id="RGD:1311278">
    <property type="organism name" value="rat"/>
</dbReference>
<dbReference type="AGR" id="RGD:1311278"/>
<dbReference type="CTD" id="80343"/>
<dbReference type="RGD" id="1311278">
    <property type="gene designation" value="Sel1l2"/>
</dbReference>
<dbReference type="eggNOG" id="KOG1550">
    <property type="taxonomic scope" value="Eukaryota"/>
</dbReference>
<dbReference type="InParanoid" id="Q5XI05"/>
<dbReference type="PhylomeDB" id="Q5XI05"/>
<dbReference type="PRO" id="PR:Q5XI05"/>
<dbReference type="Proteomes" id="UP000002494">
    <property type="component" value="Unplaced"/>
</dbReference>
<dbReference type="GO" id="GO:0005929">
    <property type="term" value="C:cilium"/>
    <property type="evidence" value="ECO:0000266"/>
    <property type="project" value="RGD"/>
</dbReference>
<dbReference type="GO" id="GO:0005789">
    <property type="term" value="C:endoplasmic reticulum membrane"/>
    <property type="evidence" value="ECO:0000318"/>
    <property type="project" value="GO_Central"/>
</dbReference>
<dbReference type="GO" id="GO:0016607">
    <property type="term" value="C:nuclear speck"/>
    <property type="evidence" value="ECO:0000250"/>
    <property type="project" value="UniProtKB"/>
</dbReference>
<dbReference type="GO" id="GO:0036503">
    <property type="term" value="P:ERAD pathway"/>
    <property type="evidence" value="ECO:0000318"/>
    <property type="project" value="GO_Central"/>
</dbReference>
<dbReference type="Gene3D" id="1.25.40.10">
    <property type="entry name" value="Tetratricopeptide repeat domain"/>
    <property type="match status" value="2"/>
</dbReference>
<dbReference type="InterPro" id="IPR006597">
    <property type="entry name" value="Sel1-like"/>
</dbReference>
<dbReference type="InterPro" id="IPR050767">
    <property type="entry name" value="Sel1_AlgK"/>
</dbReference>
<dbReference type="InterPro" id="IPR011990">
    <property type="entry name" value="TPR-like_helical_dom_sf"/>
</dbReference>
<dbReference type="PANTHER" id="PTHR11102:SF53">
    <property type="entry name" value="PROTEIN SEL-1 HOMOLOG 2"/>
    <property type="match status" value="1"/>
</dbReference>
<dbReference type="PANTHER" id="PTHR11102">
    <property type="entry name" value="SEL-1-LIKE PROTEIN"/>
    <property type="match status" value="1"/>
</dbReference>
<dbReference type="Pfam" id="PF08238">
    <property type="entry name" value="Sel1"/>
    <property type="match status" value="11"/>
</dbReference>
<dbReference type="SMART" id="SM00671">
    <property type="entry name" value="SEL1"/>
    <property type="match status" value="11"/>
</dbReference>
<dbReference type="SUPFAM" id="SSF81901">
    <property type="entry name" value="HCP-like"/>
    <property type="match status" value="3"/>
</dbReference>
<comment type="subcellular location">
    <subcellularLocation>
        <location evidence="2">Membrane</location>
        <topology evidence="2">Single-pass type I membrane protein</topology>
    </subcellularLocation>
    <subcellularLocation>
        <location evidence="1">Cell projection</location>
        <location evidence="1">Cilium</location>
    </subcellularLocation>
    <subcellularLocation>
        <location evidence="1">Nucleus speckle</location>
    </subcellularLocation>
</comment>
<comment type="similarity">
    <text evidence="3">Belongs to the sel-1 family.</text>
</comment>
<gene>
    <name type="primary">Sel1l2</name>
</gene>
<feature type="signal peptide" evidence="2">
    <location>
        <begin position="1"/>
        <end position="18"/>
    </location>
</feature>
<feature type="chain" id="PRO_0000305161" description="Protein sel-1 homolog 2">
    <location>
        <begin position="19"/>
        <end position="688"/>
    </location>
</feature>
<feature type="topological domain" description="Extracellular" evidence="2">
    <location>
        <begin position="19"/>
        <end position="662"/>
    </location>
</feature>
<feature type="transmembrane region" description="Helical" evidence="2">
    <location>
        <begin position="663"/>
        <end position="683"/>
    </location>
</feature>
<feature type="topological domain" description="Cytoplasmic" evidence="2">
    <location>
        <begin position="684"/>
        <end position="688"/>
    </location>
</feature>
<feature type="repeat" description="Sel1-like 1">
    <location>
        <begin position="107"/>
        <end position="142"/>
    </location>
</feature>
<feature type="repeat" description="Sel1-like 2">
    <location>
        <begin position="143"/>
        <end position="178"/>
    </location>
</feature>
<feature type="repeat" description="Sel1-like 3">
    <location>
        <begin position="179"/>
        <end position="214"/>
    </location>
</feature>
<feature type="repeat" description="Sel1-like 4">
    <location>
        <begin position="215"/>
        <end position="250"/>
    </location>
</feature>
<feature type="repeat" description="Sel1-like 5">
    <location>
        <begin position="297"/>
        <end position="333"/>
    </location>
</feature>
<feature type="repeat" description="Sel1-like 6">
    <location>
        <begin position="334"/>
        <end position="370"/>
    </location>
</feature>
<feature type="repeat" description="Sel1-like 7">
    <location>
        <begin position="371"/>
        <end position="406"/>
    </location>
</feature>
<feature type="repeat" description="Sel1-like 8">
    <location>
        <begin position="407"/>
        <end position="442"/>
    </location>
</feature>
<feature type="repeat" description="Sel1-like 9">
    <location>
        <begin position="443"/>
        <end position="478"/>
    </location>
</feature>
<feature type="repeat" description="Sel1-like 10">
    <location>
        <begin position="551"/>
        <end position="586"/>
    </location>
</feature>
<feature type="repeat" description="Sel1-like 11">
    <location>
        <begin position="588"/>
        <end position="623"/>
    </location>
</feature>
<feature type="glycosylation site" description="N-linked (GlcNAc...) asparagine" evidence="2">
    <location>
        <position position="34"/>
    </location>
</feature>
<feature type="glycosylation site" description="N-linked (GlcNAc...) asparagine" evidence="2">
    <location>
        <position position="162"/>
    </location>
</feature>
<evidence type="ECO:0000250" key="1">
    <source>
        <dbReference type="UniProtKB" id="Q5TEA6"/>
    </source>
</evidence>
<evidence type="ECO:0000255" key="2"/>
<evidence type="ECO:0000305" key="3"/>
<protein>
    <recommendedName>
        <fullName>Protein sel-1 homolog 2</fullName>
    </recommendedName>
    <alternativeName>
        <fullName>Suppressor of lin-12-like protein 2</fullName>
        <shortName>Sel-1L2</shortName>
    </alternativeName>
</protein>
<keyword id="KW-0966">Cell projection</keyword>
<keyword id="KW-0325">Glycoprotein</keyword>
<keyword id="KW-0472">Membrane</keyword>
<keyword id="KW-0539">Nucleus</keyword>
<keyword id="KW-1185">Reference proteome</keyword>
<keyword id="KW-0677">Repeat</keyword>
<keyword id="KW-0732">Signal</keyword>
<keyword id="KW-0812">Transmembrane</keyword>
<keyword id="KW-1133">Transmembrane helix</keyword>
<name>SE1L2_RAT</name>
<accession>Q5XI05</accession>
<proteinExistence type="evidence at transcript level"/>